<evidence type="ECO:0000255" key="1">
    <source>
        <dbReference type="HAMAP-Rule" id="MF_03028"/>
    </source>
</evidence>
<evidence type="ECO:0000256" key="2">
    <source>
        <dbReference type="SAM" id="MobiDB-lite"/>
    </source>
</evidence>
<protein>
    <recommendedName>
        <fullName evidence="1">Pescadillo homolog</fullName>
    </recommendedName>
</protein>
<comment type="function">
    <text evidence="1">Required for maturation of ribosomal RNAs and formation of the large ribosomal subunit.</text>
</comment>
<comment type="subcellular location">
    <subcellularLocation>
        <location evidence="1">Nucleus</location>
        <location evidence="1">Nucleolus</location>
    </subcellularLocation>
    <subcellularLocation>
        <location evidence="1">Nucleus</location>
        <location evidence="1">Nucleoplasm</location>
    </subcellularLocation>
</comment>
<comment type="similarity">
    <text evidence="1">Belongs to the pescadillo family.</text>
</comment>
<name>PESC_ANOGA</name>
<proteinExistence type="inferred from homology"/>
<keyword id="KW-0175">Coiled coil</keyword>
<keyword id="KW-0539">Nucleus</keyword>
<keyword id="KW-1185">Reference proteome</keyword>
<keyword id="KW-0690">Ribosome biogenesis</keyword>
<keyword id="KW-0698">rRNA processing</keyword>
<sequence>MVKRNHKFKSGEGAMYYTRKAAMNKLQLNIKDFRQLCILKGIYPREPKHRARAQHGSREMKILYHKKDITFLLHEPIVWTLRDRKIFNRRIKHAAAKQNMNLRDIRLHNYPQLKLDHIVKERYPTFIDAIKELDDCMTLLFMFSTFPATKIITRELTRMSRRLTVEFMHYVIAAQALRKVFISIKGYYFQAEIKGETVTWIVPHYFPYSPHRGEMVDLSIMKSFGDFFTVMAGFINYRLYHSINLVYPPQFAHSLDSDETMGNEQKFVSERIAALNVELLRSDGGNGDTEEPELLEWTGNDEELPHVSQIRQEAQNVNKLKTLFKGLKFFLNREVPREPLVFIIRCFGGKVSWDKTMFVGATFDESDETITHQIVDRPSMEKQHISRDYIQPQWVFDSVNQRRLLPTNKYFMGAVLPPHLSPFTSANARYVPPEELAARKAAEGEEEEETFEPAEVNADHEHISDDEEVQDPENEQEMQDYALMKAFNDERTDSLNSGKKEGADDATDNGKDAAEKKQQQNGDGESDDEDEEEEDDDDGEEEEDVMPKKQKPVSNKPKGMAVRRGTVYRENEAEKKIVDKQEEALRARMVKSRHRKLYSKLVEREKKADKNARLLANKRERIEKQKRAEQMEKQKQQRKQILA</sequence>
<dbReference type="EMBL" id="AAAB01008807">
    <property type="protein sequence ID" value="EAA04551.4"/>
    <property type="molecule type" value="Genomic_DNA"/>
</dbReference>
<dbReference type="RefSeq" id="XP_308647.4">
    <property type="nucleotide sequence ID" value="XM_308647.4"/>
</dbReference>
<dbReference type="SMR" id="Q7QIX1"/>
<dbReference type="FunCoup" id="Q7QIX1">
    <property type="interactions" value="2472"/>
</dbReference>
<dbReference type="STRING" id="7165.Q7QIX1"/>
<dbReference type="PaxDb" id="7165-AGAP007112-PA"/>
<dbReference type="EnsemblMetazoa" id="AGAP007112-RA">
    <property type="protein sequence ID" value="AGAP007112-PA"/>
    <property type="gene ID" value="AGAP007112"/>
</dbReference>
<dbReference type="GeneID" id="1269992"/>
<dbReference type="KEGG" id="aga:1269992"/>
<dbReference type="VEuPathDB" id="VectorBase:AGAMI1_003501"/>
<dbReference type="VEuPathDB" id="VectorBase:AGAP007112"/>
<dbReference type="eggNOG" id="KOG2481">
    <property type="taxonomic scope" value="Eukaryota"/>
</dbReference>
<dbReference type="HOGENOM" id="CLU_019619_0_0_1"/>
<dbReference type="InParanoid" id="Q7QIX1"/>
<dbReference type="OMA" id="QKVTWIV"/>
<dbReference type="PhylomeDB" id="Q7QIX1"/>
<dbReference type="Proteomes" id="UP000007062">
    <property type="component" value="Chromosome 2L"/>
</dbReference>
<dbReference type="GO" id="GO:0005654">
    <property type="term" value="C:nucleoplasm"/>
    <property type="evidence" value="ECO:0007669"/>
    <property type="project" value="UniProtKB-SubCell"/>
</dbReference>
<dbReference type="GO" id="GO:0070545">
    <property type="term" value="C:PeBoW complex"/>
    <property type="evidence" value="ECO:0000318"/>
    <property type="project" value="GO_Central"/>
</dbReference>
<dbReference type="GO" id="GO:0030687">
    <property type="term" value="C:preribosome, large subunit precursor"/>
    <property type="evidence" value="ECO:0007669"/>
    <property type="project" value="UniProtKB-UniRule"/>
</dbReference>
<dbReference type="GO" id="GO:0043021">
    <property type="term" value="F:ribonucleoprotein complex binding"/>
    <property type="evidence" value="ECO:0007669"/>
    <property type="project" value="UniProtKB-UniRule"/>
</dbReference>
<dbReference type="GO" id="GO:0003723">
    <property type="term" value="F:RNA binding"/>
    <property type="evidence" value="ECO:0000318"/>
    <property type="project" value="GO_Central"/>
</dbReference>
<dbReference type="GO" id="GO:0000466">
    <property type="term" value="P:maturation of 5.8S rRNA from tricistronic rRNA transcript (SSU-rRNA, 5.8S rRNA, LSU-rRNA)"/>
    <property type="evidence" value="ECO:0007669"/>
    <property type="project" value="UniProtKB-UniRule"/>
</dbReference>
<dbReference type="GO" id="GO:0000463">
    <property type="term" value="P:maturation of LSU-rRNA from tricistronic rRNA transcript (SSU-rRNA, 5.8S rRNA, LSU-rRNA)"/>
    <property type="evidence" value="ECO:0000318"/>
    <property type="project" value="GO_Central"/>
</dbReference>
<dbReference type="CDD" id="cd17709">
    <property type="entry name" value="BRCT_pescadillo_like"/>
    <property type="match status" value="1"/>
</dbReference>
<dbReference type="FunFam" id="3.40.50.10190:FF:000002">
    <property type="entry name" value="Pescadillo homolog"/>
    <property type="match status" value="1"/>
</dbReference>
<dbReference type="Gene3D" id="3.40.50.10190">
    <property type="entry name" value="BRCT domain"/>
    <property type="match status" value="1"/>
</dbReference>
<dbReference type="HAMAP" id="MF_03028">
    <property type="entry name" value="Pescadillo"/>
    <property type="match status" value="1"/>
</dbReference>
<dbReference type="InterPro" id="IPR001357">
    <property type="entry name" value="BRCT_dom"/>
</dbReference>
<dbReference type="InterPro" id="IPR036420">
    <property type="entry name" value="BRCT_dom_sf"/>
</dbReference>
<dbReference type="InterPro" id="IPR010613">
    <property type="entry name" value="PES"/>
</dbReference>
<dbReference type="PANTHER" id="PTHR12221">
    <property type="entry name" value="PESCADILLO - RELATED"/>
    <property type="match status" value="1"/>
</dbReference>
<dbReference type="PANTHER" id="PTHR12221:SF6">
    <property type="entry name" value="PESCADILLO HOMOLOG"/>
    <property type="match status" value="1"/>
</dbReference>
<dbReference type="Pfam" id="PF16589">
    <property type="entry name" value="BRCT_2"/>
    <property type="match status" value="1"/>
</dbReference>
<dbReference type="Pfam" id="PF06732">
    <property type="entry name" value="Pescadillo_N"/>
    <property type="match status" value="1"/>
</dbReference>
<dbReference type="SMART" id="SM00292">
    <property type="entry name" value="BRCT"/>
    <property type="match status" value="1"/>
</dbReference>
<dbReference type="SUPFAM" id="SSF52113">
    <property type="entry name" value="BRCT domain"/>
    <property type="match status" value="1"/>
</dbReference>
<dbReference type="PROSITE" id="PS50172">
    <property type="entry name" value="BRCT"/>
    <property type="match status" value="1"/>
</dbReference>
<organism>
    <name type="scientific">Anopheles gambiae</name>
    <name type="common">African malaria mosquito</name>
    <dbReference type="NCBI Taxonomy" id="7165"/>
    <lineage>
        <taxon>Eukaryota</taxon>
        <taxon>Metazoa</taxon>
        <taxon>Ecdysozoa</taxon>
        <taxon>Arthropoda</taxon>
        <taxon>Hexapoda</taxon>
        <taxon>Insecta</taxon>
        <taxon>Pterygota</taxon>
        <taxon>Neoptera</taxon>
        <taxon>Endopterygota</taxon>
        <taxon>Diptera</taxon>
        <taxon>Nematocera</taxon>
        <taxon>Culicoidea</taxon>
        <taxon>Culicidae</taxon>
        <taxon>Anophelinae</taxon>
        <taxon>Anopheles</taxon>
    </lineage>
</organism>
<reference key="1">
    <citation type="journal article" date="2002" name="Science">
        <title>The genome sequence of the malaria mosquito Anopheles gambiae.</title>
        <authorList>
            <person name="Holt R.A."/>
            <person name="Subramanian G.M."/>
            <person name="Halpern A."/>
            <person name="Sutton G.G."/>
            <person name="Charlab R."/>
            <person name="Nusskern D.R."/>
            <person name="Wincker P."/>
            <person name="Clark A.G."/>
            <person name="Ribeiro J.M.C."/>
            <person name="Wides R."/>
            <person name="Salzberg S.L."/>
            <person name="Loftus B.J."/>
            <person name="Yandell M.D."/>
            <person name="Majoros W.H."/>
            <person name="Rusch D.B."/>
            <person name="Lai Z."/>
            <person name="Kraft C.L."/>
            <person name="Abril J.F."/>
            <person name="Anthouard V."/>
            <person name="Arensburger P."/>
            <person name="Atkinson P.W."/>
            <person name="Baden H."/>
            <person name="de Berardinis V."/>
            <person name="Baldwin D."/>
            <person name="Benes V."/>
            <person name="Biedler J."/>
            <person name="Blass C."/>
            <person name="Bolanos R."/>
            <person name="Boscus D."/>
            <person name="Barnstead M."/>
            <person name="Cai S."/>
            <person name="Center A."/>
            <person name="Chaturverdi K."/>
            <person name="Christophides G.K."/>
            <person name="Chrystal M.A.M."/>
            <person name="Clamp M."/>
            <person name="Cravchik A."/>
            <person name="Curwen V."/>
            <person name="Dana A."/>
            <person name="Delcher A."/>
            <person name="Dew I."/>
            <person name="Evans C.A."/>
            <person name="Flanigan M."/>
            <person name="Grundschober-Freimoser A."/>
            <person name="Friedli L."/>
            <person name="Gu Z."/>
            <person name="Guan P."/>
            <person name="Guigo R."/>
            <person name="Hillenmeyer M.E."/>
            <person name="Hladun S.L."/>
            <person name="Hogan J.R."/>
            <person name="Hong Y.S."/>
            <person name="Hoover J."/>
            <person name="Jaillon O."/>
            <person name="Ke Z."/>
            <person name="Kodira C.D."/>
            <person name="Kokoza E."/>
            <person name="Koutsos A."/>
            <person name="Letunic I."/>
            <person name="Levitsky A.A."/>
            <person name="Liang Y."/>
            <person name="Lin J.-J."/>
            <person name="Lobo N.F."/>
            <person name="Lopez J.R."/>
            <person name="Malek J.A."/>
            <person name="McIntosh T.C."/>
            <person name="Meister S."/>
            <person name="Miller J.R."/>
            <person name="Mobarry C."/>
            <person name="Mongin E."/>
            <person name="Murphy S.D."/>
            <person name="O'Brochta D.A."/>
            <person name="Pfannkoch C."/>
            <person name="Qi R."/>
            <person name="Regier M.A."/>
            <person name="Remington K."/>
            <person name="Shao H."/>
            <person name="Sharakhova M.V."/>
            <person name="Sitter C.D."/>
            <person name="Shetty J."/>
            <person name="Smith T.J."/>
            <person name="Strong R."/>
            <person name="Sun J."/>
            <person name="Thomasova D."/>
            <person name="Ton L.Q."/>
            <person name="Topalis P."/>
            <person name="Tu Z.J."/>
            <person name="Unger M.F."/>
            <person name="Walenz B."/>
            <person name="Wang A.H."/>
            <person name="Wang J."/>
            <person name="Wang M."/>
            <person name="Wang X."/>
            <person name="Woodford K.J."/>
            <person name="Wortman J.R."/>
            <person name="Wu M."/>
            <person name="Yao A."/>
            <person name="Zdobnov E.M."/>
            <person name="Zhang H."/>
            <person name="Zhao Q."/>
            <person name="Zhao S."/>
            <person name="Zhu S.C."/>
            <person name="Zhimulev I."/>
            <person name="Coluzzi M."/>
            <person name="della Torre A."/>
            <person name="Roth C.W."/>
            <person name="Louis C."/>
            <person name="Kalush F."/>
            <person name="Mural R.J."/>
            <person name="Myers E.W."/>
            <person name="Adams M.D."/>
            <person name="Smith H.O."/>
            <person name="Broder S."/>
            <person name="Gardner M.J."/>
            <person name="Fraser C.M."/>
            <person name="Birney E."/>
            <person name="Bork P."/>
            <person name="Brey P.T."/>
            <person name="Venter J.C."/>
            <person name="Weissenbach J."/>
            <person name="Kafatos F.C."/>
            <person name="Collins F.H."/>
            <person name="Hoffman S.L."/>
        </authorList>
    </citation>
    <scope>NUCLEOTIDE SEQUENCE [LARGE SCALE GENOMIC DNA]</scope>
    <source>
        <strain>PEST</strain>
    </source>
</reference>
<feature type="chain" id="PRO_0000370450" description="Pescadillo homolog">
    <location>
        <begin position="1"/>
        <end position="643"/>
    </location>
</feature>
<feature type="domain" description="BRCT" evidence="1">
    <location>
        <begin position="319"/>
        <end position="412"/>
    </location>
</feature>
<feature type="region of interest" description="Disordered" evidence="2">
    <location>
        <begin position="437"/>
        <end position="475"/>
    </location>
</feature>
<feature type="region of interest" description="Disordered" evidence="2">
    <location>
        <begin position="492"/>
        <end position="571"/>
    </location>
</feature>
<feature type="region of interest" description="Disordered" evidence="2">
    <location>
        <begin position="609"/>
        <end position="643"/>
    </location>
</feature>
<feature type="coiled-coil region" evidence="1">
    <location>
        <begin position="569"/>
        <end position="643"/>
    </location>
</feature>
<feature type="compositionally biased region" description="Acidic residues" evidence="2">
    <location>
        <begin position="464"/>
        <end position="475"/>
    </location>
</feature>
<feature type="compositionally biased region" description="Basic and acidic residues" evidence="2">
    <location>
        <begin position="492"/>
        <end position="518"/>
    </location>
</feature>
<feature type="compositionally biased region" description="Acidic residues" evidence="2">
    <location>
        <begin position="524"/>
        <end position="544"/>
    </location>
</feature>
<feature type="compositionally biased region" description="Basic and acidic residues" evidence="2">
    <location>
        <begin position="609"/>
        <end position="635"/>
    </location>
</feature>
<gene>
    <name type="ORF">AGAP007112</name>
</gene>
<accession>Q7QIX1</accession>